<sequence length="940" mass="99158">MGSGPIDPKELLKGLDSFLNRDGEVKSVDGISKIFSLMKEARKMVSRCTYLNILLQTRSPEILIKFIDVGGYKLLNNWLTYSKTTNNIPLLQQILLTLQHLPLTVDHLKQNNTAKLVKQLSKSSEDEELRKLASVLVSDWMAVIRSQSSTQPAEKDKKKRKDEGKSRTTPPERPLTEVKAETRAEEAPEKKREKPKSLRTTAPSHAKFRSTGLELETPSLVPVKKNASTVVVSDKYNLKPIPLKRQSNVAAPGDATPPAEKKYKPLNTTPNATKEIKVKIIPPQPMEGLGFLDALNSAPVPGIKIKKKKKVLSPTAAKPSPFEGKTSTEPSTAKPSSPEPAPPSEAMDIDRPGTPVPPVEVPELMDTASLEPGALDAKPVESPGDPNQLTRKGRKRKSVTWPEEGKLREYFYFELDETERVNVNKIKDFGEAAKREILSDRHAFETARRLSHDNMEEKVPWVCPRPLVLPSPLVTPGSNSQERYIQAEREKGILQELFLNKESPHEPDPEPYEPIPPKLIPLDEECSMDETPYVETLEPGGSGGSPDGAGGSKLPPVLANLMGSMGAGKGPQGPGGGGINVQEILTSIMGSPNSHPSEELLKQPDYSDKIKQMLVPHGLLGPGPIANGFPPGGPGGPKGMQHFPPGPGGPMPGPHGGPGGPVGPRLLGPPPPPRGGDPFWDGPGDPMRGGPMRGGPGPGPGPYHRGRGGRGGNEPPPPPPPPFRGARGGRSGGGPPNGRGGPGGGMVGGGGHRPHEGPGGGMGNSSGHRPHEGPGSGMGSGHRPHEGPGSSMGGGGGHRPHEGPGGGISGGSGHRPHEGPGGGMGAGGGHRPHEGPGGSMGGSGGHRPHEGPGHGGPHGHRPHDVPGHRGHDHRGPPHEHRGHDGPGHGGGGHRGHDGGHSHGGDMSNRPVCRHFMMKGNCRYENNCAFYHPGVNGPPLP</sequence>
<protein>
    <recommendedName>
        <fullName>Serine/threonine-protein phosphatase 1 regulatory subunit 10</fullName>
    </recommendedName>
    <alternativeName>
        <fullName>MHC class I region proline-rich protein CAT53</fullName>
    </alternativeName>
</protein>
<evidence type="ECO:0000250" key="1">
    <source>
        <dbReference type="UniProtKB" id="O55000"/>
    </source>
</evidence>
<evidence type="ECO:0000250" key="2">
    <source>
        <dbReference type="UniProtKB" id="Q80W00"/>
    </source>
</evidence>
<evidence type="ECO:0000250" key="3">
    <source>
        <dbReference type="UniProtKB" id="Q96QC0"/>
    </source>
</evidence>
<evidence type="ECO:0000255" key="4">
    <source>
        <dbReference type="PROSITE-ProRule" id="PRU00649"/>
    </source>
</evidence>
<evidence type="ECO:0000255" key="5">
    <source>
        <dbReference type="PROSITE-ProRule" id="PRU00723"/>
    </source>
</evidence>
<evidence type="ECO:0000256" key="6">
    <source>
        <dbReference type="SAM" id="MobiDB-lite"/>
    </source>
</evidence>
<accession>Q5TM61</accession>
<name>PP1RA_MACMU</name>
<keyword id="KW-0158">Chromosome</keyword>
<keyword id="KW-0238">DNA-binding</keyword>
<keyword id="KW-1017">Isopeptide bond</keyword>
<keyword id="KW-0479">Metal-binding</keyword>
<keyword id="KW-0488">Methylation</keyword>
<keyword id="KW-0539">Nucleus</keyword>
<keyword id="KW-0597">Phosphoprotein</keyword>
<keyword id="KW-1185">Reference proteome</keyword>
<keyword id="KW-0694">RNA-binding</keyword>
<keyword id="KW-0832">Ubl conjugation</keyword>
<keyword id="KW-0862">Zinc</keyword>
<keyword id="KW-0863">Zinc-finger</keyword>
<proteinExistence type="inferred from homology"/>
<comment type="function">
    <text evidence="2 3">Substrate-recognition component of the PNUTS-PP1 protein phosphatase complex, a protein phosphatase 1 (PP1) complex that promotes RNA polymerase II transcription pause-release, allowing transcription elongation. Promoter-proximal pausing by RNA polymerase II is a transcription halt following transcription initiation but prior to elongation, which acts as a checkpoint to control that transcripts are favorably configured for transcriptional elongation. The PNUTS-PP1 complex mediates the release of RNA polymerase II from promoter-proximal region of genes by catalyzing dephosphorylation of proteins involved in transcription, such as AFF4, CDK9, MEPCE, INTS12, NCBP1, POLR2M/GDOWN1 and SUPT6H. The PNUTS-PP1 complex also regulates RNA polymerase II transcription termination by mediating dephosphorylation of SUPT5H in termination zones downstream of poly(A) sites, thereby promoting deceleration of RNA polymerase II transcription. PNUTS-PP1 complex is also involved in the response to replication stress by mediating dephosphorylation of POLR2A at 'Ser-5' of the CTD, promoting RNA polymerase II degradation (By similarity). The PNUTS-PP1 complex also plays a role in the control of chromatin structure and cell cycle progression during the transition from mitosis into interphase (By similarity). PNUTS-PP1 complex mediates dephosphorylation of MYC, promoting MYC stability by preventing MYC ubiquitination by the SCF(FBXW7) complex. In addition to acts as a substrate-recognition component, PPP1R10/PNUTS also acts as a nuclear targeting subunit for the PNUTS-PP1 complex. In some context, PPP1R10/PNUTS also acts as an inhibitor of protein phosphatase 1 (PP1) activity by preventing access to substrates, such as RB (By similarity).</text>
</comment>
<comment type="subunit">
    <text evidence="3">Component of the PNUTS-PP1 complex (also named PTW/PP1 complex), composed of PPP1R10/PNUTS, TOX4, WDR82, and PPP1CA (or PPP1CB or PPP1CC).</text>
</comment>
<comment type="subcellular location">
    <subcellularLocation>
        <location evidence="3 4">Nucleus</location>
    </subcellularLocation>
    <subcellularLocation>
        <location evidence="3">Chromosome</location>
    </subcellularLocation>
    <text evidence="2 3">Found in discrete nucleoplasmic bodies and within nucleoli. Associates with RNA polymerase II (Pol II) on chromatin during pause-release checkpoint (By similarity). Associates with chromatin during interphase, excluded from condensed chromosomes during early mitosis and is reloaded onto chromosomes at the late telophase (By similarity).</text>
</comment>
<comment type="domain">
    <text evidence="3">The TFIIS N-terminal domain specifically recognizes disordered sequences in protein substrates that are then dephosphorylated by PPP1CA (or PPP1CB or PPP1CC).</text>
</comment>
<comment type="PTM">
    <text evidence="1">Phosphorylated on Ser-398 by PKA within the region necessary for interaction with PPP1CA.</text>
</comment>
<feature type="chain" id="PRO_0000071511" description="Serine/threonine-protein phosphatase 1 regulatory subunit 10">
    <location>
        <begin position="1"/>
        <end position="940"/>
    </location>
</feature>
<feature type="domain" description="TFIIS N-terminal" evidence="4">
    <location>
        <begin position="73"/>
        <end position="147"/>
    </location>
</feature>
<feature type="zinc finger region" description="C3H1-type" evidence="5">
    <location>
        <begin position="906"/>
        <end position="934"/>
    </location>
</feature>
<feature type="region of interest" description="Interaction with TOX4" evidence="2">
    <location>
        <begin position="1"/>
        <end position="348"/>
    </location>
</feature>
<feature type="region of interest" description="Disordered" evidence="6">
    <location>
        <begin position="147"/>
        <end position="211"/>
    </location>
</feature>
<feature type="region of interest" description="Disordered" evidence="6">
    <location>
        <begin position="247"/>
        <end position="270"/>
    </location>
</feature>
<feature type="region of interest" description="Disordered" evidence="6">
    <location>
        <begin position="304"/>
        <end position="400"/>
    </location>
</feature>
<feature type="region of interest" description="Necessary for interaction with PPP1CA" evidence="1">
    <location>
        <begin position="357"/>
        <end position="433"/>
    </location>
</feature>
<feature type="region of interest" description="Necessary for interaction with PPP1CC" evidence="3">
    <location>
        <begin position="393"/>
        <end position="408"/>
    </location>
</feature>
<feature type="region of interest" description="Interaction with WDR82" evidence="2">
    <location>
        <begin position="418"/>
        <end position="619"/>
    </location>
</feature>
<feature type="region of interest" description="Disordered" evidence="6">
    <location>
        <begin position="533"/>
        <end position="905"/>
    </location>
</feature>
<feature type="short sequence motif" description="PP1-binding motif" evidence="1">
    <location>
        <begin position="394"/>
        <end position="423"/>
    </location>
</feature>
<feature type="compositionally biased region" description="Basic and acidic residues" evidence="6">
    <location>
        <begin position="153"/>
        <end position="166"/>
    </location>
</feature>
<feature type="compositionally biased region" description="Basic and acidic residues" evidence="6">
    <location>
        <begin position="174"/>
        <end position="196"/>
    </location>
</feature>
<feature type="compositionally biased region" description="Low complexity" evidence="6">
    <location>
        <begin position="325"/>
        <end position="336"/>
    </location>
</feature>
<feature type="compositionally biased region" description="Gly residues" evidence="6">
    <location>
        <begin position="540"/>
        <end position="551"/>
    </location>
</feature>
<feature type="compositionally biased region" description="Gly residues" evidence="6">
    <location>
        <begin position="565"/>
        <end position="579"/>
    </location>
</feature>
<feature type="compositionally biased region" description="Polar residues" evidence="6">
    <location>
        <begin position="583"/>
        <end position="595"/>
    </location>
</feature>
<feature type="compositionally biased region" description="Basic and acidic residues" evidence="6">
    <location>
        <begin position="596"/>
        <end position="611"/>
    </location>
</feature>
<feature type="compositionally biased region" description="Pro residues" evidence="6">
    <location>
        <begin position="644"/>
        <end position="655"/>
    </location>
</feature>
<feature type="compositionally biased region" description="Low complexity" evidence="6">
    <location>
        <begin position="676"/>
        <end position="690"/>
    </location>
</feature>
<feature type="compositionally biased region" description="Pro residues" evidence="6">
    <location>
        <begin position="714"/>
        <end position="723"/>
    </location>
</feature>
<feature type="compositionally biased region" description="Gly residues" evidence="6">
    <location>
        <begin position="726"/>
        <end position="764"/>
    </location>
</feature>
<feature type="compositionally biased region" description="Gly residues" evidence="6">
    <location>
        <begin position="790"/>
        <end position="845"/>
    </location>
</feature>
<feature type="compositionally biased region" description="Basic and acidic residues" evidence="6">
    <location>
        <begin position="862"/>
        <end position="886"/>
    </location>
</feature>
<feature type="compositionally biased region" description="Basic and acidic residues" evidence="6">
    <location>
        <begin position="894"/>
        <end position="903"/>
    </location>
</feature>
<feature type="modified residue" description="Phosphothreonine" evidence="3">
    <location>
        <position position="256"/>
    </location>
</feature>
<feature type="modified residue" description="Phosphoserine" evidence="3">
    <location>
        <position position="313"/>
    </location>
</feature>
<feature type="modified residue" description="Phosphoserine" evidence="3">
    <location>
        <position position="382"/>
    </location>
</feature>
<feature type="modified residue" description="Phosphoserine; by PKA" evidence="3">
    <location>
        <position position="398"/>
    </location>
</feature>
<feature type="modified residue" description="Phosphoserine" evidence="3">
    <location>
        <position position="545"/>
    </location>
</feature>
<feature type="modified residue" description="Phosphoserine" evidence="3">
    <location>
        <position position="591"/>
    </location>
</feature>
<feature type="modified residue" description="Omega-N-methylarginine" evidence="3">
    <location>
        <position position="665"/>
    </location>
</feature>
<feature type="modified residue" description="Omega-N-methylarginine" evidence="3">
    <location>
        <position position="693"/>
    </location>
</feature>
<feature type="modified residue" description="Omega-N-methylarginine" evidence="2">
    <location>
        <position position="739"/>
    </location>
</feature>
<feature type="cross-link" description="Glycyl lysine isopeptide (Lys-Gly) (interchain with G-Cter in SUMO2)" evidence="3">
    <location>
        <position position="179"/>
    </location>
</feature>
<feature type="cross-link" description="Glycyl lysine isopeptide (Lys-Gly) (interchain with G-Cter in SUMO2)" evidence="3">
    <location>
        <position position="262"/>
    </location>
</feature>
<dbReference type="EMBL" id="AB128049">
    <property type="protein sequence ID" value="BAD69765.1"/>
    <property type="molecule type" value="Genomic_DNA"/>
</dbReference>
<dbReference type="RefSeq" id="NP_001108416.1">
    <property type="nucleotide sequence ID" value="NM_001114944.1"/>
</dbReference>
<dbReference type="RefSeq" id="XP_014991333.2">
    <property type="nucleotide sequence ID" value="XM_015135847.2"/>
</dbReference>
<dbReference type="RefSeq" id="XP_028702620.1">
    <property type="nucleotide sequence ID" value="XM_028846787.1"/>
</dbReference>
<dbReference type="BMRB" id="Q5TM61"/>
<dbReference type="SMR" id="Q5TM61"/>
<dbReference type="FunCoup" id="Q5TM61">
    <property type="interactions" value="2997"/>
</dbReference>
<dbReference type="STRING" id="9544.ENSMMUP00000067273"/>
<dbReference type="Ensembl" id="ENSMMUT00000009142.4">
    <property type="protein sequence ID" value="ENSMMUP00000008589.4"/>
    <property type="gene ID" value="ENSMMUG00000006524.4"/>
</dbReference>
<dbReference type="Ensembl" id="ENSMMUT00000084603.1">
    <property type="protein sequence ID" value="ENSMMUP00000067273.1"/>
    <property type="gene ID" value="ENSMMUG00000006524.4"/>
</dbReference>
<dbReference type="GeneID" id="711949"/>
<dbReference type="KEGG" id="mcc:711949"/>
<dbReference type="CTD" id="5514"/>
<dbReference type="VEuPathDB" id="HostDB:ENSMMUG00000006524"/>
<dbReference type="VGNC" id="VGNC:76367">
    <property type="gene designation" value="PPP1R10"/>
</dbReference>
<dbReference type="eggNOG" id="ENOG502QQ2I">
    <property type="taxonomic scope" value="Eukaryota"/>
</dbReference>
<dbReference type="GeneTree" id="ENSGT00940000159263"/>
<dbReference type="InParanoid" id="Q5TM61"/>
<dbReference type="OMA" id="NGPPQIW"/>
<dbReference type="OrthoDB" id="2138378at2759"/>
<dbReference type="Proteomes" id="UP000006718">
    <property type="component" value="Chromosome 4"/>
</dbReference>
<dbReference type="Bgee" id="ENSMMUG00000006524">
    <property type="expression patterns" value="Expressed in liver and 21 other cell types or tissues"/>
</dbReference>
<dbReference type="ExpressionAtlas" id="Q5TM61">
    <property type="expression patterns" value="baseline"/>
</dbReference>
<dbReference type="GO" id="GO:0000785">
    <property type="term" value="C:chromatin"/>
    <property type="evidence" value="ECO:0000250"/>
    <property type="project" value="UniProtKB"/>
</dbReference>
<dbReference type="GO" id="GO:0000781">
    <property type="term" value="C:chromosome, telomeric region"/>
    <property type="evidence" value="ECO:0007669"/>
    <property type="project" value="Ensembl"/>
</dbReference>
<dbReference type="GO" id="GO:0016604">
    <property type="term" value="C:nuclear body"/>
    <property type="evidence" value="ECO:0007669"/>
    <property type="project" value="Ensembl"/>
</dbReference>
<dbReference type="GO" id="GO:0072357">
    <property type="term" value="C:PTW/PP1 phosphatase complex"/>
    <property type="evidence" value="ECO:0000250"/>
    <property type="project" value="UniProtKB"/>
</dbReference>
<dbReference type="GO" id="GO:0003677">
    <property type="term" value="F:DNA binding"/>
    <property type="evidence" value="ECO:0007669"/>
    <property type="project" value="UniProtKB-KW"/>
</dbReference>
<dbReference type="GO" id="GO:0140767">
    <property type="term" value="F:enzyme-substrate adaptor activity"/>
    <property type="evidence" value="ECO:0000250"/>
    <property type="project" value="UniProtKB"/>
</dbReference>
<dbReference type="GO" id="GO:0008157">
    <property type="term" value="F:protein phosphatase 1 binding"/>
    <property type="evidence" value="ECO:0000318"/>
    <property type="project" value="GO_Central"/>
</dbReference>
<dbReference type="GO" id="GO:0004864">
    <property type="term" value="F:protein phosphatase inhibitor activity"/>
    <property type="evidence" value="ECO:0007669"/>
    <property type="project" value="UniProtKB-KW"/>
</dbReference>
<dbReference type="GO" id="GO:0019888">
    <property type="term" value="F:protein phosphatase regulator activity"/>
    <property type="evidence" value="ECO:0000250"/>
    <property type="project" value="UniProtKB"/>
</dbReference>
<dbReference type="GO" id="GO:0003723">
    <property type="term" value="F:RNA binding"/>
    <property type="evidence" value="ECO:0007669"/>
    <property type="project" value="UniProtKB-KW"/>
</dbReference>
<dbReference type="GO" id="GO:0008270">
    <property type="term" value="F:zinc ion binding"/>
    <property type="evidence" value="ECO:0007669"/>
    <property type="project" value="UniProtKB-KW"/>
</dbReference>
<dbReference type="GO" id="GO:0010667">
    <property type="term" value="P:negative regulation of cardiac muscle cell apoptotic process"/>
    <property type="evidence" value="ECO:0007669"/>
    <property type="project" value="Ensembl"/>
</dbReference>
<dbReference type="GO" id="GO:1904290">
    <property type="term" value="P:negative regulation of mitotic DNA damage checkpoint"/>
    <property type="evidence" value="ECO:0007669"/>
    <property type="project" value="Ensembl"/>
</dbReference>
<dbReference type="GO" id="GO:0034244">
    <property type="term" value="P:negative regulation of transcription elongation by RNA polymerase II"/>
    <property type="evidence" value="ECO:0000250"/>
    <property type="project" value="UniProtKB"/>
</dbReference>
<dbReference type="GO" id="GO:0032206">
    <property type="term" value="P:positive regulation of telomere maintenance"/>
    <property type="evidence" value="ECO:0007669"/>
    <property type="project" value="Ensembl"/>
</dbReference>
<dbReference type="GO" id="GO:2000806">
    <property type="term" value="P:positive regulation of termination of RNA polymerase II transcription, poly(A)-coupled"/>
    <property type="evidence" value="ECO:0000250"/>
    <property type="project" value="UniProtKB"/>
</dbReference>
<dbReference type="GO" id="GO:0032968">
    <property type="term" value="P:positive regulation of transcription elongation by RNA polymerase II"/>
    <property type="evidence" value="ECO:0000250"/>
    <property type="project" value="UniProtKB"/>
</dbReference>
<dbReference type="GO" id="GO:0050821">
    <property type="term" value="P:protein stabilization"/>
    <property type="evidence" value="ECO:0007669"/>
    <property type="project" value="Ensembl"/>
</dbReference>
<dbReference type="GO" id="GO:0001111">
    <property type="term" value="P:RNA polymerase II promoter clearance"/>
    <property type="evidence" value="ECO:0000250"/>
    <property type="project" value="UniProtKB"/>
</dbReference>
<dbReference type="CDD" id="cd00183">
    <property type="entry name" value="TFIIS_I"/>
    <property type="match status" value="1"/>
</dbReference>
<dbReference type="FunFam" id="1.20.930.10:FF:000006">
    <property type="entry name" value="Serine/threonine-protein phosphatase 1 regulatory subunit 10"/>
    <property type="match status" value="1"/>
</dbReference>
<dbReference type="Gene3D" id="1.20.930.10">
    <property type="entry name" value="Conserved domain common to transcription factors TFIIS, elongin A, CRSP70"/>
    <property type="match status" value="1"/>
</dbReference>
<dbReference type="InterPro" id="IPR003617">
    <property type="entry name" value="TFIIS/CRSP70_N_sub"/>
</dbReference>
<dbReference type="InterPro" id="IPR035441">
    <property type="entry name" value="TFIIS/LEDGF_dom_sf"/>
</dbReference>
<dbReference type="InterPro" id="IPR017923">
    <property type="entry name" value="TFIIS_N"/>
</dbReference>
<dbReference type="InterPro" id="IPR000571">
    <property type="entry name" value="Znf_CCCH"/>
</dbReference>
<dbReference type="InterPro" id="IPR036855">
    <property type="entry name" value="Znf_CCCH_sf"/>
</dbReference>
<dbReference type="PANTHER" id="PTHR46557">
    <property type="entry name" value="SERINE/THREONINE-PROTEIN PHOSPHATASE 1 REGULATORY SUBUNIT 10-RELATED"/>
    <property type="match status" value="1"/>
</dbReference>
<dbReference type="PANTHER" id="PTHR46557:SF1">
    <property type="entry name" value="SERINE_THREONINE-PROTEIN PHOSPHATASE 1 REGULATORY SUBUNIT 10"/>
    <property type="match status" value="1"/>
</dbReference>
<dbReference type="Pfam" id="PF08711">
    <property type="entry name" value="Med26"/>
    <property type="match status" value="1"/>
</dbReference>
<dbReference type="Pfam" id="PF00642">
    <property type="entry name" value="zf-CCCH"/>
    <property type="match status" value="1"/>
</dbReference>
<dbReference type="SMART" id="SM00509">
    <property type="entry name" value="TFS2N"/>
    <property type="match status" value="1"/>
</dbReference>
<dbReference type="SMART" id="SM00356">
    <property type="entry name" value="ZnF_C3H1"/>
    <property type="match status" value="1"/>
</dbReference>
<dbReference type="SUPFAM" id="SSF90229">
    <property type="entry name" value="CCCH zinc finger"/>
    <property type="match status" value="1"/>
</dbReference>
<dbReference type="SUPFAM" id="SSF47676">
    <property type="entry name" value="Conserved domain common to transcription factors TFIIS, elongin A, CRSP70"/>
    <property type="match status" value="1"/>
</dbReference>
<dbReference type="PROSITE" id="PS51319">
    <property type="entry name" value="TFIIS_N"/>
    <property type="match status" value="1"/>
</dbReference>
<dbReference type="PROSITE" id="PS50103">
    <property type="entry name" value="ZF_C3H1"/>
    <property type="match status" value="1"/>
</dbReference>
<reference key="1">
    <citation type="journal article" date="2004" name="Mol. Biol. Evol.">
        <title>Rhesus macaque class I duplicon structures, organization, and evolution within the alpha block of the major histocompatibility complex.</title>
        <authorList>
            <person name="Kulski J.K."/>
            <person name="Anzai T."/>
            <person name="Shiina T."/>
            <person name="Inoko H."/>
        </authorList>
    </citation>
    <scope>NUCLEOTIDE SEQUENCE [LARGE SCALE GENOMIC DNA]</scope>
</reference>
<gene>
    <name type="primary">PPP1R10</name>
</gene>
<organism>
    <name type="scientific">Macaca mulatta</name>
    <name type="common">Rhesus macaque</name>
    <dbReference type="NCBI Taxonomy" id="9544"/>
    <lineage>
        <taxon>Eukaryota</taxon>
        <taxon>Metazoa</taxon>
        <taxon>Chordata</taxon>
        <taxon>Craniata</taxon>
        <taxon>Vertebrata</taxon>
        <taxon>Euteleostomi</taxon>
        <taxon>Mammalia</taxon>
        <taxon>Eutheria</taxon>
        <taxon>Euarchontoglires</taxon>
        <taxon>Primates</taxon>
        <taxon>Haplorrhini</taxon>
        <taxon>Catarrhini</taxon>
        <taxon>Cercopithecidae</taxon>
        <taxon>Cercopithecinae</taxon>
        <taxon>Macaca</taxon>
    </lineage>
</organism>